<dbReference type="EC" id="4.2.1.33" evidence="1"/>
<dbReference type="EMBL" id="CP000768">
    <property type="protein sequence ID" value="ABS43299.1"/>
    <property type="molecule type" value="Genomic_DNA"/>
</dbReference>
<dbReference type="SMR" id="A7H664"/>
<dbReference type="KEGG" id="cjd:JJD26997_2092"/>
<dbReference type="HOGENOM" id="CLU_081378_0_3_7"/>
<dbReference type="UniPathway" id="UPA00048">
    <property type="reaction ID" value="UER00071"/>
</dbReference>
<dbReference type="Proteomes" id="UP000002302">
    <property type="component" value="Chromosome"/>
</dbReference>
<dbReference type="GO" id="GO:0009316">
    <property type="term" value="C:3-isopropylmalate dehydratase complex"/>
    <property type="evidence" value="ECO:0007669"/>
    <property type="project" value="InterPro"/>
</dbReference>
<dbReference type="GO" id="GO:0003861">
    <property type="term" value="F:3-isopropylmalate dehydratase activity"/>
    <property type="evidence" value="ECO:0007669"/>
    <property type="project" value="UniProtKB-UniRule"/>
</dbReference>
<dbReference type="GO" id="GO:0009098">
    <property type="term" value="P:L-leucine biosynthetic process"/>
    <property type="evidence" value="ECO:0007669"/>
    <property type="project" value="UniProtKB-UniRule"/>
</dbReference>
<dbReference type="CDD" id="cd01577">
    <property type="entry name" value="IPMI_Swivel"/>
    <property type="match status" value="1"/>
</dbReference>
<dbReference type="FunFam" id="3.20.19.10:FF:000003">
    <property type="entry name" value="3-isopropylmalate dehydratase small subunit"/>
    <property type="match status" value="1"/>
</dbReference>
<dbReference type="Gene3D" id="3.20.19.10">
    <property type="entry name" value="Aconitase, domain 4"/>
    <property type="match status" value="1"/>
</dbReference>
<dbReference type="HAMAP" id="MF_01031">
    <property type="entry name" value="LeuD_type1"/>
    <property type="match status" value="1"/>
</dbReference>
<dbReference type="InterPro" id="IPR004431">
    <property type="entry name" value="3-IsopropMal_deHydase_ssu"/>
</dbReference>
<dbReference type="InterPro" id="IPR015928">
    <property type="entry name" value="Aconitase/3IPM_dehydase_swvl"/>
</dbReference>
<dbReference type="InterPro" id="IPR000573">
    <property type="entry name" value="AconitaseA/IPMdHydase_ssu_swvl"/>
</dbReference>
<dbReference type="InterPro" id="IPR033940">
    <property type="entry name" value="IPMI_Swivel"/>
</dbReference>
<dbReference type="InterPro" id="IPR050075">
    <property type="entry name" value="LeuD"/>
</dbReference>
<dbReference type="NCBIfam" id="TIGR00171">
    <property type="entry name" value="leuD"/>
    <property type="match status" value="1"/>
</dbReference>
<dbReference type="NCBIfam" id="NF002458">
    <property type="entry name" value="PRK01641.1"/>
    <property type="match status" value="1"/>
</dbReference>
<dbReference type="PANTHER" id="PTHR43345:SF5">
    <property type="entry name" value="3-ISOPROPYLMALATE DEHYDRATASE SMALL SUBUNIT"/>
    <property type="match status" value="1"/>
</dbReference>
<dbReference type="PANTHER" id="PTHR43345">
    <property type="entry name" value="3-ISOPROPYLMALATE DEHYDRATASE SMALL SUBUNIT 2-RELATED-RELATED"/>
    <property type="match status" value="1"/>
</dbReference>
<dbReference type="Pfam" id="PF00694">
    <property type="entry name" value="Aconitase_C"/>
    <property type="match status" value="1"/>
</dbReference>
<dbReference type="SUPFAM" id="SSF52016">
    <property type="entry name" value="LeuD/IlvD-like"/>
    <property type="match status" value="1"/>
</dbReference>
<feature type="chain" id="PRO_1000063748" description="3-isopropylmalate dehydratase small subunit">
    <location>
        <begin position="1"/>
        <end position="200"/>
    </location>
</feature>
<name>LEUD_CAMJD</name>
<sequence>MQKFIIHKGIACPLEYANIDTDQIIPKQFLLAVSKQGFGKHLFHDLRYVDDKESVLNMDFNLNKKEYQNSSILVSFENFGSGSSREHAPWALVDYGIRAIIAPSFADIFKNNALGNGLLTIELTKDEVLEIVDELKKSQDKNIEISLLEKRVFFKDKIFSFDLDDFHRICLLEGLDNIALTLKHEAQIKAYEKNSKSFLV</sequence>
<reference key="1">
    <citation type="submission" date="2007-07" db="EMBL/GenBank/DDBJ databases">
        <title>Complete genome sequence of Campylobacter jejuni subsp doylei 269.97 isolated from human blood.</title>
        <authorList>
            <person name="Fouts D.E."/>
            <person name="Mongodin E.F."/>
            <person name="Puiu D."/>
            <person name="Sebastian Y."/>
            <person name="Miller W.G."/>
            <person name="Mandrell R.E."/>
            <person name="Lastovica A.J."/>
            <person name="Nelson K.E."/>
        </authorList>
    </citation>
    <scope>NUCLEOTIDE SEQUENCE [LARGE SCALE GENOMIC DNA]</scope>
    <source>
        <strain>ATCC BAA-1458 / RM4099 / 269.97</strain>
    </source>
</reference>
<comment type="function">
    <text evidence="1">Catalyzes the isomerization between 2-isopropylmalate and 3-isopropylmalate, via the formation of 2-isopropylmaleate.</text>
</comment>
<comment type="catalytic activity">
    <reaction evidence="1">
        <text>(2R,3S)-3-isopropylmalate = (2S)-2-isopropylmalate</text>
        <dbReference type="Rhea" id="RHEA:32287"/>
        <dbReference type="ChEBI" id="CHEBI:1178"/>
        <dbReference type="ChEBI" id="CHEBI:35121"/>
        <dbReference type="EC" id="4.2.1.33"/>
    </reaction>
</comment>
<comment type="pathway">
    <text evidence="1">Amino-acid biosynthesis; L-leucine biosynthesis; L-leucine from 3-methyl-2-oxobutanoate: step 2/4.</text>
</comment>
<comment type="subunit">
    <text evidence="1">Heterodimer of LeuC and LeuD.</text>
</comment>
<comment type="similarity">
    <text evidence="1">Belongs to the LeuD family. LeuD type 1 subfamily.</text>
</comment>
<organism>
    <name type="scientific">Campylobacter jejuni subsp. doylei (strain ATCC BAA-1458 / RM4099 / 269.97)</name>
    <dbReference type="NCBI Taxonomy" id="360109"/>
    <lineage>
        <taxon>Bacteria</taxon>
        <taxon>Pseudomonadati</taxon>
        <taxon>Campylobacterota</taxon>
        <taxon>Epsilonproteobacteria</taxon>
        <taxon>Campylobacterales</taxon>
        <taxon>Campylobacteraceae</taxon>
        <taxon>Campylobacter</taxon>
    </lineage>
</organism>
<protein>
    <recommendedName>
        <fullName evidence="1">3-isopropylmalate dehydratase small subunit</fullName>
        <ecNumber evidence="1">4.2.1.33</ecNumber>
    </recommendedName>
    <alternativeName>
        <fullName evidence="1">Alpha-IPM isomerase</fullName>
        <shortName evidence="1">IPMI</shortName>
    </alternativeName>
    <alternativeName>
        <fullName evidence="1">Isopropylmalate isomerase</fullName>
    </alternativeName>
</protein>
<accession>A7H664</accession>
<keyword id="KW-0028">Amino-acid biosynthesis</keyword>
<keyword id="KW-0100">Branched-chain amino acid biosynthesis</keyword>
<keyword id="KW-0432">Leucine biosynthesis</keyword>
<keyword id="KW-0456">Lyase</keyword>
<gene>
    <name evidence="1" type="primary">leuD</name>
    <name type="ordered locus">JJD26997_2092</name>
</gene>
<evidence type="ECO:0000255" key="1">
    <source>
        <dbReference type="HAMAP-Rule" id="MF_01031"/>
    </source>
</evidence>
<proteinExistence type="inferred from homology"/>